<protein>
    <recommendedName>
        <fullName evidence="3">Putative protein FRMPD2-like</fullName>
    </recommendedName>
    <alternativeName>
        <fullName evidence="4">FERM and PDZ domain-containing protein 2 pseudogene 1</fullName>
    </alternativeName>
    <alternativeName>
        <fullName evidence="4">FERM and PDZ domain-containing protein 2B pseudogene</fullName>
    </alternativeName>
    <alternativeName>
        <fullName evidence="4">PDZ domain-containing protein 5A</fullName>
    </alternativeName>
</protein>
<organism>
    <name type="scientific">Homo sapiens</name>
    <name type="common">Human</name>
    <dbReference type="NCBI Taxonomy" id="9606"/>
    <lineage>
        <taxon>Eukaryota</taxon>
        <taxon>Metazoa</taxon>
        <taxon>Chordata</taxon>
        <taxon>Craniata</taxon>
        <taxon>Vertebrata</taxon>
        <taxon>Euteleostomi</taxon>
        <taxon>Mammalia</taxon>
        <taxon>Eutheria</taxon>
        <taxon>Euarchontoglires</taxon>
        <taxon>Primates</taxon>
        <taxon>Haplorrhini</taxon>
        <taxon>Catarrhini</taxon>
        <taxon>Hominidae</taxon>
        <taxon>Homo</taxon>
    </lineage>
</organism>
<keyword id="KW-1185">Reference proteome</keyword>
<keyword id="KW-0677">Repeat</keyword>
<accession>Q6IN97</accession>
<accession>B2RPG2</accession>
<accession>Q5RJ30</accession>
<feature type="chain" id="PRO_0000306855" description="Putative protein FRMPD2-like">
    <location>
        <begin position="1"/>
        <end position="320"/>
    </location>
</feature>
<feature type="domain" description="PDZ 1" evidence="1">
    <location>
        <begin position="1"/>
        <end position="46"/>
    </location>
</feature>
<feature type="domain" description="PDZ 2" evidence="1">
    <location>
        <begin position="90"/>
        <end position="178"/>
    </location>
</feature>
<feature type="region of interest" description="Disordered" evidence="2">
    <location>
        <begin position="215"/>
        <end position="239"/>
    </location>
</feature>
<reference key="1">
    <citation type="journal article" date="2004" name="Nat. Genet.">
        <title>Complete sequencing and characterization of 21,243 full-length human cDNAs.</title>
        <authorList>
            <person name="Ota T."/>
            <person name="Suzuki Y."/>
            <person name="Nishikawa T."/>
            <person name="Otsuki T."/>
            <person name="Sugiyama T."/>
            <person name="Irie R."/>
            <person name="Wakamatsu A."/>
            <person name="Hayashi K."/>
            <person name="Sato H."/>
            <person name="Nagai K."/>
            <person name="Kimura K."/>
            <person name="Makita H."/>
            <person name="Sekine M."/>
            <person name="Obayashi M."/>
            <person name="Nishi T."/>
            <person name="Shibahara T."/>
            <person name="Tanaka T."/>
            <person name="Ishii S."/>
            <person name="Yamamoto J."/>
            <person name="Saito K."/>
            <person name="Kawai Y."/>
            <person name="Isono Y."/>
            <person name="Nakamura Y."/>
            <person name="Nagahari K."/>
            <person name="Murakami K."/>
            <person name="Yasuda T."/>
            <person name="Iwayanagi T."/>
            <person name="Wagatsuma M."/>
            <person name="Shiratori A."/>
            <person name="Sudo H."/>
            <person name="Hosoiri T."/>
            <person name="Kaku Y."/>
            <person name="Kodaira H."/>
            <person name="Kondo H."/>
            <person name="Sugawara M."/>
            <person name="Takahashi M."/>
            <person name="Kanda K."/>
            <person name="Yokoi T."/>
            <person name="Furuya T."/>
            <person name="Kikkawa E."/>
            <person name="Omura Y."/>
            <person name="Abe K."/>
            <person name="Kamihara K."/>
            <person name="Katsuta N."/>
            <person name="Sato K."/>
            <person name="Tanikawa M."/>
            <person name="Yamazaki M."/>
            <person name="Ninomiya K."/>
            <person name="Ishibashi T."/>
            <person name="Yamashita H."/>
            <person name="Murakawa K."/>
            <person name="Fujimori K."/>
            <person name="Tanai H."/>
            <person name="Kimata M."/>
            <person name="Watanabe M."/>
            <person name="Hiraoka S."/>
            <person name="Chiba Y."/>
            <person name="Ishida S."/>
            <person name="Ono Y."/>
            <person name="Takiguchi S."/>
            <person name="Watanabe S."/>
            <person name="Yosida M."/>
            <person name="Hotuta T."/>
            <person name="Kusano J."/>
            <person name="Kanehori K."/>
            <person name="Takahashi-Fujii A."/>
            <person name="Hara H."/>
            <person name="Tanase T.-O."/>
            <person name="Nomura Y."/>
            <person name="Togiya S."/>
            <person name="Komai F."/>
            <person name="Hara R."/>
            <person name="Takeuchi K."/>
            <person name="Arita M."/>
            <person name="Imose N."/>
            <person name="Musashino K."/>
            <person name="Yuuki H."/>
            <person name="Oshima A."/>
            <person name="Sasaki N."/>
            <person name="Aotsuka S."/>
            <person name="Yoshikawa Y."/>
            <person name="Matsunawa H."/>
            <person name="Ichihara T."/>
            <person name="Shiohata N."/>
            <person name="Sano S."/>
            <person name="Moriya S."/>
            <person name="Momiyama H."/>
            <person name="Satoh N."/>
            <person name="Takami S."/>
            <person name="Terashima Y."/>
            <person name="Suzuki O."/>
            <person name="Nakagawa S."/>
            <person name="Senoh A."/>
            <person name="Mizoguchi H."/>
            <person name="Goto Y."/>
            <person name="Shimizu F."/>
            <person name="Wakebe H."/>
            <person name="Hishigaki H."/>
            <person name="Watanabe T."/>
            <person name="Sugiyama A."/>
            <person name="Takemoto M."/>
            <person name="Kawakami B."/>
            <person name="Yamazaki M."/>
            <person name="Watanabe K."/>
            <person name="Kumagai A."/>
            <person name="Itakura S."/>
            <person name="Fukuzumi Y."/>
            <person name="Fujimori Y."/>
            <person name="Komiyama M."/>
            <person name="Tashiro H."/>
            <person name="Tanigami A."/>
            <person name="Fujiwara T."/>
            <person name="Ono T."/>
            <person name="Yamada K."/>
            <person name="Fujii Y."/>
            <person name="Ozaki K."/>
            <person name="Hirao M."/>
            <person name="Ohmori Y."/>
            <person name="Kawabata A."/>
            <person name="Hikiji T."/>
            <person name="Kobatake N."/>
            <person name="Inagaki H."/>
            <person name="Ikema Y."/>
            <person name="Okamoto S."/>
            <person name="Okitani R."/>
            <person name="Kawakami T."/>
            <person name="Noguchi S."/>
            <person name="Itoh T."/>
            <person name="Shigeta K."/>
            <person name="Senba T."/>
            <person name="Matsumura K."/>
            <person name="Nakajima Y."/>
            <person name="Mizuno T."/>
            <person name="Morinaga M."/>
            <person name="Sasaki M."/>
            <person name="Togashi T."/>
            <person name="Oyama M."/>
            <person name="Hata H."/>
            <person name="Watanabe M."/>
            <person name="Komatsu T."/>
            <person name="Mizushima-Sugano J."/>
            <person name="Satoh T."/>
            <person name="Shirai Y."/>
            <person name="Takahashi Y."/>
            <person name="Nakagawa K."/>
            <person name="Okumura K."/>
            <person name="Nagase T."/>
            <person name="Nomura N."/>
            <person name="Kikuchi H."/>
            <person name="Masuho Y."/>
            <person name="Yamashita R."/>
            <person name="Nakai K."/>
            <person name="Yada T."/>
            <person name="Nakamura Y."/>
            <person name="Ohara O."/>
            <person name="Isogai T."/>
            <person name="Sugano S."/>
        </authorList>
    </citation>
    <scope>NUCLEOTIDE SEQUENCE [LARGE SCALE MRNA]</scope>
    <source>
        <tissue>Amygdala</tissue>
        <tissue>Brain</tissue>
    </source>
</reference>
<reference key="2">
    <citation type="journal article" date="2004" name="Nature">
        <title>The DNA sequence and comparative analysis of human chromosome 10.</title>
        <authorList>
            <person name="Deloukas P."/>
            <person name="Earthrowl M.E."/>
            <person name="Grafham D.V."/>
            <person name="Rubenfield M."/>
            <person name="French L."/>
            <person name="Steward C.A."/>
            <person name="Sims S.K."/>
            <person name="Jones M.C."/>
            <person name="Searle S."/>
            <person name="Scott C."/>
            <person name="Howe K."/>
            <person name="Hunt S.E."/>
            <person name="Andrews T.D."/>
            <person name="Gilbert J.G.R."/>
            <person name="Swarbreck D."/>
            <person name="Ashurst J.L."/>
            <person name="Taylor A."/>
            <person name="Battles J."/>
            <person name="Bird C.P."/>
            <person name="Ainscough R."/>
            <person name="Almeida J.P."/>
            <person name="Ashwell R.I.S."/>
            <person name="Ambrose K.D."/>
            <person name="Babbage A.K."/>
            <person name="Bagguley C.L."/>
            <person name="Bailey J."/>
            <person name="Banerjee R."/>
            <person name="Bates K."/>
            <person name="Beasley H."/>
            <person name="Bray-Allen S."/>
            <person name="Brown A.J."/>
            <person name="Brown J.Y."/>
            <person name="Burford D.C."/>
            <person name="Burrill W."/>
            <person name="Burton J."/>
            <person name="Cahill P."/>
            <person name="Camire D."/>
            <person name="Carter N.P."/>
            <person name="Chapman J.C."/>
            <person name="Clark S.Y."/>
            <person name="Clarke G."/>
            <person name="Clee C.M."/>
            <person name="Clegg S."/>
            <person name="Corby N."/>
            <person name="Coulson A."/>
            <person name="Dhami P."/>
            <person name="Dutta I."/>
            <person name="Dunn M."/>
            <person name="Faulkner L."/>
            <person name="Frankish A."/>
            <person name="Frankland J.A."/>
            <person name="Garner P."/>
            <person name="Garnett J."/>
            <person name="Gribble S."/>
            <person name="Griffiths C."/>
            <person name="Grocock R."/>
            <person name="Gustafson E."/>
            <person name="Hammond S."/>
            <person name="Harley J.L."/>
            <person name="Hart E."/>
            <person name="Heath P.D."/>
            <person name="Ho T.P."/>
            <person name="Hopkins B."/>
            <person name="Horne J."/>
            <person name="Howden P.J."/>
            <person name="Huckle E."/>
            <person name="Hynds C."/>
            <person name="Johnson C."/>
            <person name="Johnson D."/>
            <person name="Kana A."/>
            <person name="Kay M."/>
            <person name="Kimberley A.M."/>
            <person name="Kershaw J.K."/>
            <person name="Kokkinaki M."/>
            <person name="Laird G.K."/>
            <person name="Lawlor S."/>
            <person name="Lee H.M."/>
            <person name="Leongamornlert D.A."/>
            <person name="Laird G."/>
            <person name="Lloyd C."/>
            <person name="Lloyd D.M."/>
            <person name="Loveland J."/>
            <person name="Lovell J."/>
            <person name="McLaren S."/>
            <person name="McLay K.E."/>
            <person name="McMurray A."/>
            <person name="Mashreghi-Mohammadi M."/>
            <person name="Matthews L."/>
            <person name="Milne S."/>
            <person name="Nickerson T."/>
            <person name="Nguyen M."/>
            <person name="Overton-Larty E."/>
            <person name="Palmer S.A."/>
            <person name="Pearce A.V."/>
            <person name="Peck A.I."/>
            <person name="Pelan S."/>
            <person name="Phillimore B."/>
            <person name="Porter K."/>
            <person name="Rice C.M."/>
            <person name="Rogosin A."/>
            <person name="Ross M.T."/>
            <person name="Sarafidou T."/>
            <person name="Sehra H.K."/>
            <person name="Shownkeen R."/>
            <person name="Skuce C.D."/>
            <person name="Smith M."/>
            <person name="Standring L."/>
            <person name="Sycamore N."/>
            <person name="Tester J."/>
            <person name="Thorpe A."/>
            <person name="Torcasso W."/>
            <person name="Tracey A."/>
            <person name="Tromans A."/>
            <person name="Tsolas J."/>
            <person name="Wall M."/>
            <person name="Walsh J."/>
            <person name="Wang H."/>
            <person name="Weinstock K."/>
            <person name="West A.P."/>
            <person name="Willey D.L."/>
            <person name="Whitehead S.L."/>
            <person name="Wilming L."/>
            <person name="Wray P.W."/>
            <person name="Young L."/>
            <person name="Chen Y."/>
            <person name="Lovering R.C."/>
            <person name="Moschonas N.K."/>
            <person name="Siebert R."/>
            <person name="Fechtel K."/>
            <person name="Bentley D."/>
            <person name="Durbin R.M."/>
            <person name="Hubbard T."/>
            <person name="Doucette-Stamm L."/>
            <person name="Beck S."/>
            <person name="Smith D.R."/>
            <person name="Rogers J."/>
        </authorList>
    </citation>
    <scope>NUCLEOTIDE SEQUENCE [LARGE SCALE GENOMIC DNA]</scope>
</reference>
<reference key="3">
    <citation type="journal article" date="2004" name="Genome Res.">
        <title>The status, quality, and expansion of the NIH full-length cDNA project: the Mammalian Gene Collection (MGC).</title>
        <authorList>
            <consortium name="The MGC Project Team"/>
        </authorList>
    </citation>
    <scope>NUCLEOTIDE SEQUENCE [LARGE SCALE MRNA]</scope>
    <source>
        <tissue>Brain</tissue>
        <tissue>Fetal brain</tissue>
    </source>
</reference>
<name>FRP2L_HUMAN</name>
<dbReference type="EMBL" id="AK294650">
    <property type="protein sequence ID" value="BAG57825.1"/>
    <property type="molecule type" value="mRNA"/>
</dbReference>
<dbReference type="EMBL" id="AK315971">
    <property type="protein sequence ID" value="BAH14342.1"/>
    <property type="molecule type" value="mRNA"/>
</dbReference>
<dbReference type="EMBL" id="AL450334">
    <property type="status" value="NOT_ANNOTATED_CDS"/>
    <property type="molecule type" value="Genomic_DNA"/>
</dbReference>
<dbReference type="EMBL" id="BX005072">
    <property type="status" value="NOT_ANNOTATED_CDS"/>
    <property type="molecule type" value="Genomic_DNA"/>
</dbReference>
<dbReference type="EMBL" id="BC071635">
    <property type="protein sequence ID" value="AAH71635.1"/>
    <property type="molecule type" value="mRNA"/>
</dbReference>
<dbReference type="EMBL" id="BC072395">
    <property type="protein sequence ID" value="AAH72395.1"/>
    <property type="molecule type" value="mRNA"/>
</dbReference>
<dbReference type="EMBL" id="BC110798">
    <property type="protein sequence ID" value="AAI10799.1"/>
    <property type="molecule type" value="mRNA"/>
</dbReference>
<dbReference type="EMBL" id="BC137431">
    <property type="protein sequence ID" value="AAI37432.1"/>
    <property type="molecule type" value="mRNA"/>
</dbReference>
<dbReference type="EMBL" id="BC137434">
    <property type="protein sequence ID" value="AAI37435.1"/>
    <property type="molecule type" value="mRNA"/>
</dbReference>
<dbReference type="EMBL" id="BC137439">
    <property type="protein sequence ID" value="AAI37440.1"/>
    <property type="molecule type" value="mRNA"/>
</dbReference>
<dbReference type="EMBL" id="BC137440">
    <property type="protein sequence ID" value="AAI37441.1"/>
    <property type="molecule type" value="mRNA"/>
</dbReference>
<dbReference type="SMR" id="Q6IN97"/>
<dbReference type="BioMuta" id="HGNC:16843"/>
<dbReference type="DMDM" id="74757975"/>
<dbReference type="jPOST" id="Q6IN97"/>
<dbReference type="MassIVE" id="Q6IN97"/>
<dbReference type="PeptideAtlas" id="Q6IN97"/>
<dbReference type="AGR" id="HGNC:16843"/>
<dbReference type="GeneCards" id="FRMPD2B"/>
<dbReference type="HGNC" id="HGNC:16843">
    <property type="gene designation" value="FRMPD2B"/>
</dbReference>
<dbReference type="neXtProt" id="NX_Q6IN97"/>
<dbReference type="InParanoid" id="Q6IN97"/>
<dbReference type="PAN-GO" id="Q6IN97">
    <property type="GO annotations" value="4 GO annotations based on evolutionary models"/>
</dbReference>
<dbReference type="PhylomeDB" id="Q6IN97"/>
<dbReference type="Pharos" id="Q6IN97">
    <property type="development level" value="Tdark"/>
</dbReference>
<dbReference type="Proteomes" id="UP000005640">
    <property type="component" value="Unplaced"/>
</dbReference>
<dbReference type="RNAct" id="Q6IN97">
    <property type="molecule type" value="protein"/>
</dbReference>
<dbReference type="CDD" id="cd06695">
    <property type="entry name" value="PDZ3_PTPN13_FRMPD2-like"/>
    <property type="match status" value="1"/>
</dbReference>
<dbReference type="FunFam" id="2.30.42.10:FF:000084">
    <property type="entry name" value="Tyrosine-protein phosphatase non-receptor type 13"/>
    <property type="match status" value="1"/>
</dbReference>
<dbReference type="Gene3D" id="2.30.42.10">
    <property type="match status" value="2"/>
</dbReference>
<dbReference type="InterPro" id="IPR052074">
    <property type="entry name" value="NonRcpt_TyrProt_Phosphatase"/>
</dbReference>
<dbReference type="InterPro" id="IPR001478">
    <property type="entry name" value="PDZ"/>
</dbReference>
<dbReference type="InterPro" id="IPR036034">
    <property type="entry name" value="PDZ_sf"/>
</dbReference>
<dbReference type="PANTHER" id="PTHR46900:SF4">
    <property type="entry name" value="FERM AND PDZ DOMAIN CONTAINING 2"/>
    <property type="match status" value="1"/>
</dbReference>
<dbReference type="PANTHER" id="PTHR46900">
    <property type="entry name" value="TYROSINE-PROTEIN PHOSPHATASE NON-RECEPTOR TYPE 13"/>
    <property type="match status" value="1"/>
</dbReference>
<dbReference type="Pfam" id="PF00595">
    <property type="entry name" value="PDZ"/>
    <property type="match status" value="1"/>
</dbReference>
<dbReference type="SMART" id="SM00228">
    <property type="entry name" value="PDZ"/>
    <property type="match status" value="1"/>
</dbReference>
<dbReference type="SUPFAM" id="SSF50156">
    <property type="entry name" value="PDZ domain-like"/>
    <property type="match status" value="2"/>
</dbReference>
<dbReference type="PROSITE" id="PS50106">
    <property type="entry name" value="PDZ"/>
    <property type="match status" value="2"/>
</dbReference>
<gene>
    <name evidence="4" type="primary">FRMPD2B</name>
    <name type="synonym">FRMPD2L1</name>
    <name type="synonym">FRMPD2L2</name>
    <name type="synonym">FRMPD2P1</name>
    <name type="synonym">FRMPD2P2</name>
    <name type="synonym">PDZD5A</name>
    <name type="synonym">PDZD5B</name>
    <name type="synonym">PDZK5A</name>
    <name type="synonym">PDZK5B</name>
</gene>
<sequence length="320" mass="35161">MTSIPFPGDRLLQVDGVILCGLTHKQAVQCLKGPGQVARLVLERRVPRSTQQCPSANDSMGDERTAVSLVTALPGRPSSCVSVTDGPKFEVKLKKNANGLGFSFVQMEKESCSHLKSDLVRIKRLFPGQPAEENGAIAAGDIILAVNGRSTEGLIFQEVLHLLRGAPQEVTLLLCRPPPGALPEMEQEWQTPELSADKEFTRATCTDSCTSPILDQEDSWRDSASPDAGEGLGLRPESSQKAIREAQWGQNRERPWASSLTHSPESHPHLCKLHQERDESTLATSLEKDVRQNCYSVCDIMRLGRYSFSSPLTRLSTDIF</sequence>
<proteinExistence type="uncertain"/>
<evidence type="ECO:0000255" key="1">
    <source>
        <dbReference type="PROSITE-ProRule" id="PRU00143"/>
    </source>
</evidence>
<evidence type="ECO:0000256" key="2">
    <source>
        <dbReference type="SAM" id="MobiDB-lite"/>
    </source>
</evidence>
<evidence type="ECO:0000305" key="3"/>
<evidence type="ECO:0000312" key="4">
    <source>
        <dbReference type="HGNC" id="HGNC:16843"/>
    </source>
</evidence>
<comment type="caution">
    <text evidence="3">Could be the product of a pseudogene. This is the product of related genes or pseudogenes located in a region of chromosome 10q which contains a segmental duplication resulting in three nearly identical regions.</text>
</comment>